<dbReference type="EMBL" id="X97644">
    <property type="protein sequence ID" value="CAA66243.1"/>
    <property type="molecule type" value="Genomic_DNA"/>
</dbReference>
<dbReference type="EMBL" id="Z72631">
    <property type="protein sequence ID" value="CAA96815.1"/>
    <property type="molecule type" value="Genomic_DNA"/>
</dbReference>
<dbReference type="PIR" id="S64117">
    <property type="entry name" value="S64117"/>
</dbReference>
<dbReference type="PaxDb" id="4932-YGL109W"/>
<dbReference type="AGR" id="SGD:S000003077"/>
<dbReference type="SGD" id="S000003077">
    <property type="gene designation" value="YGL109W"/>
</dbReference>
<dbReference type="HOGENOM" id="CLU_2212031_0_0_1"/>
<sequence length="107" mass="12435">MAAQNPLADIQVYKRYKAKRRMEGQKKNSCTIAYIDSLQYYCRRSLSHKSCFPFPSQHAFSRPLPLSESYETWHALELAFCLTRPYCTFHSSLEISSQQLTLRPPLG</sequence>
<organism>
    <name type="scientific">Saccharomyces cerevisiae (strain ATCC 204508 / S288c)</name>
    <name type="common">Baker's yeast</name>
    <dbReference type="NCBI Taxonomy" id="559292"/>
    <lineage>
        <taxon>Eukaryota</taxon>
        <taxon>Fungi</taxon>
        <taxon>Dikarya</taxon>
        <taxon>Ascomycota</taxon>
        <taxon>Saccharomycotina</taxon>
        <taxon>Saccharomycetes</taxon>
        <taxon>Saccharomycetales</taxon>
        <taxon>Saccharomycetaceae</taxon>
        <taxon>Saccharomyces</taxon>
    </lineage>
</organism>
<proteinExistence type="uncertain"/>
<protein>
    <recommendedName>
        <fullName>Putative uncharacterized protein YGL109W</fullName>
    </recommendedName>
</protein>
<feature type="chain" id="PRO_0000202750" description="Putative uncharacterized protein YGL109W">
    <location>
        <begin position="1"/>
        <end position="107"/>
    </location>
</feature>
<name>YGK9_YEAST</name>
<reference key="1">
    <citation type="journal article" date="1997" name="Yeast">
        <title>The genes encoding the transcription factor yTAFII60, the G4p1 protein and a putative glucose transporter are contained in a 12.3 kb DNA fragment on the left arm of Saccharomyces cerevisiae chromosome VII.</title>
        <authorList>
            <person name="Paoluzi S."/>
            <person name="Minenkova O."/>
            <person name="Castagnoli L."/>
        </authorList>
    </citation>
    <scope>NUCLEOTIDE SEQUENCE [GENOMIC DNA]</scope>
</reference>
<reference key="2">
    <citation type="journal article" date="1997" name="Nature">
        <title>The nucleotide sequence of Saccharomyces cerevisiae chromosome VII.</title>
        <authorList>
            <person name="Tettelin H."/>
            <person name="Agostoni-Carbone M.L."/>
            <person name="Albermann K."/>
            <person name="Albers M."/>
            <person name="Arroyo J."/>
            <person name="Backes U."/>
            <person name="Barreiros T."/>
            <person name="Bertani I."/>
            <person name="Bjourson A.J."/>
            <person name="Brueckner M."/>
            <person name="Bruschi C.V."/>
            <person name="Carignani G."/>
            <person name="Castagnoli L."/>
            <person name="Cerdan E."/>
            <person name="Clemente M.L."/>
            <person name="Coblenz A."/>
            <person name="Coglievina M."/>
            <person name="Coissac E."/>
            <person name="Defoor E."/>
            <person name="Del Bino S."/>
            <person name="Delius H."/>
            <person name="Delneri D."/>
            <person name="de Wergifosse P."/>
            <person name="Dujon B."/>
            <person name="Durand P."/>
            <person name="Entian K.-D."/>
            <person name="Eraso P."/>
            <person name="Escribano V."/>
            <person name="Fabiani L."/>
            <person name="Fartmann B."/>
            <person name="Feroli F."/>
            <person name="Feuermann M."/>
            <person name="Frontali L."/>
            <person name="Garcia-Gonzalez M."/>
            <person name="Garcia-Saez M.I."/>
            <person name="Goffeau A."/>
            <person name="Guerreiro P."/>
            <person name="Hani J."/>
            <person name="Hansen M."/>
            <person name="Hebling U."/>
            <person name="Hernandez K."/>
            <person name="Heumann K."/>
            <person name="Hilger F."/>
            <person name="Hofmann B."/>
            <person name="Indge K.J."/>
            <person name="James C.M."/>
            <person name="Klima R."/>
            <person name="Koetter P."/>
            <person name="Kramer B."/>
            <person name="Kramer W."/>
            <person name="Lauquin G."/>
            <person name="Leuther H."/>
            <person name="Louis E.J."/>
            <person name="Maillier E."/>
            <person name="Marconi A."/>
            <person name="Martegani E."/>
            <person name="Mazon M.J."/>
            <person name="Mazzoni C."/>
            <person name="McReynolds A.D.K."/>
            <person name="Melchioretto P."/>
            <person name="Mewes H.-W."/>
            <person name="Minenkova O."/>
            <person name="Mueller-Auer S."/>
            <person name="Nawrocki A."/>
            <person name="Netter P."/>
            <person name="Neu R."/>
            <person name="Nombela C."/>
            <person name="Oliver S.G."/>
            <person name="Panzeri L."/>
            <person name="Paoluzi S."/>
            <person name="Plevani P."/>
            <person name="Portetelle D."/>
            <person name="Portillo F."/>
            <person name="Potier S."/>
            <person name="Purnelle B."/>
            <person name="Rieger M."/>
            <person name="Riles L."/>
            <person name="Rinaldi T."/>
            <person name="Robben J."/>
            <person name="Rodrigues-Pousada C."/>
            <person name="Rodriguez-Belmonte E."/>
            <person name="Rodriguez-Torres A.M."/>
            <person name="Rose M."/>
            <person name="Ruzzi M."/>
            <person name="Saliola M."/>
            <person name="Sanchez-Perez M."/>
            <person name="Schaefer B."/>
            <person name="Schaefer M."/>
            <person name="Scharfe M."/>
            <person name="Schmidheini T."/>
            <person name="Schreer A."/>
            <person name="Skala J."/>
            <person name="Souciet J.-L."/>
            <person name="Steensma H.Y."/>
            <person name="Talla E."/>
            <person name="Thierry A."/>
            <person name="Vandenbol M."/>
            <person name="van der Aart Q.J.M."/>
            <person name="Van Dyck L."/>
            <person name="Vanoni M."/>
            <person name="Verhasselt P."/>
            <person name="Voet M."/>
            <person name="Volckaert G."/>
            <person name="Wambutt R."/>
            <person name="Watson M.D."/>
            <person name="Weber N."/>
            <person name="Wedler E."/>
            <person name="Wedler H."/>
            <person name="Wipfli P."/>
            <person name="Wolf K."/>
            <person name="Wright L.F."/>
            <person name="Zaccaria P."/>
            <person name="Zimmermann M."/>
            <person name="Zollner A."/>
            <person name="Kleine K."/>
        </authorList>
    </citation>
    <scope>NUCLEOTIDE SEQUENCE [LARGE SCALE GENOMIC DNA]</scope>
    <source>
        <strain>ATCC 204508 / S288c</strain>
    </source>
</reference>
<reference key="3">
    <citation type="journal article" date="2014" name="G3 (Bethesda)">
        <title>The reference genome sequence of Saccharomyces cerevisiae: Then and now.</title>
        <authorList>
            <person name="Engel S.R."/>
            <person name="Dietrich F.S."/>
            <person name="Fisk D.G."/>
            <person name="Binkley G."/>
            <person name="Balakrishnan R."/>
            <person name="Costanzo M.C."/>
            <person name="Dwight S.S."/>
            <person name="Hitz B.C."/>
            <person name="Karra K."/>
            <person name="Nash R.S."/>
            <person name="Weng S."/>
            <person name="Wong E.D."/>
            <person name="Lloyd P."/>
            <person name="Skrzypek M.S."/>
            <person name="Miyasato S.R."/>
            <person name="Simison M."/>
            <person name="Cherry J.M."/>
        </authorList>
    </citation>
    <scope>GENOME REANNOTATION</scope>
    <source>
        <strain>ATCC 204508 / S288c</strain>
    </source>
</reference>
<comment type="miscellaneous">
    <text evidence="1">Partially overlaps YGL108C.</text>
</comment>
<comment type="caution">
    <text evidence="2">Product of a dubious gene prediction unlikely to encode a functional protein. Because of that it is not part of the S.cerevisiae S288c complete/reference proteome set.</text>
</comment>
<evidence type="ECO:0000305" key="1"/>
<evidence type="ECO:0000305" key="2">
    <source>
    </source>
</evidence>
<gene>
    <name type="ordered locus">YGL109W</name>
    <name type="ORF">G3065</name>
</gene>
<accession>P53138</accession>